<name>IRAK4_BOVIN</name>
<accession>Q1RMT8</accession>
<proteinExistence type="evidence at transcript level"/>
<evidence type="ECO:0000250" key="1"/>
<evidence type="ECO:0000250" key="2">
    <source>
        <dbReference type="UniProtKB" id="Q9NWZ3"/>
    </source>
</evidence>
<evidence type="ECO:0000255" key="3">
    <source>
        <dbReference type="PROSITE-ProRule" id="PRU00159"/>
    </source>
</evidence>
<evidence type="ECO:0000305" key="4"/>
<gene>
    <name type="primary">IRAK4</name>
</gene>
<protein>
    <recommendedName>
        <fullName>Interleukin-1 receptor-associated kinase 4</fullName>
        <shortName>IRAK-4</shortName>
        <ecNumber>2.7.11.1</ecNumber>
    </recommendedName>
</protein>
<organism>
    <name type="scientific">Bos taurus</name>
    <name type="common">Bovine</name>
    <dbReference type="NCBI Taxonomy" id="9913"/>
    <lineage>
        <taxon>Eukaryota</taxon>
        <taxon>Metazoa</taxon>
        <taxon>Chordata</taxon>
        <taxon>Craniata</taxon>
        <taxon>Vertebrata</taxon>
        <taxon>Euteleostomi</taxon>
        <taxon>Mammalia</taxon>
        <taxon>Eutheria</taxon>
        <taxon>Laurasiatheria</taxon>
        <taxon>Artiodactyla</taxon>
        <taxon>Ruminantia</taxon>
        <taxon>Pecora</taxon>
        <taxon>Bovidae</taxon>
        <taxon>Bovinae</taxon>
        <taxon>Bos</taxon>
    </lineage>
</organism>
<dbReference type="EC" id="2.7.11.1"/>
<dbReference type="EMBL" id="BC114720">
    <property type="protein sequence ID" value="AAI14721.1"/>
    <property type="molecule type" value="mRNA"/>
</dbReference>
<dbReference type="RefSeq" id="NP_001069466.1">
    <property type="nucleotide sequence ID" value="NM_001075998.1"/>
</dbReference>
<dbReference type="RefSeq" id="XP_005206483.1">
    <property type="nucleotide sequence ID" value="XM_005206426.5"/>
</dbReference>
<dbReference type="SMR" id="Q1RMT8"/>
<dbReference type="FunCoup" id="Q1RMT8">
    <property type="interactions" value="3679"/>
</dbReference>
<dbReference type="STRING" id="9913.ENSBTAP00000028115"/>
<dbReference type="PaxDb" id="9913-ENSBTAP00000028115"/>
<dbReference type="Ensembl" id="ENSBTAT00000028115.6">
    <property type="protein sequence ID" value="ENSBTAP00000028115.4"/>
    <property type="gene ID" value="ENSBTAG00000021105.6"/>
</dbReference>
<dbReference type="GeneID" id="533692"/>
<dbReference type="KEGG" id="bta:533692"/>
<dbReference type="CTD" id="51135"/>
<dbReference type="VEuPathDB" id="HostDB:ENSBTAG00000021105"/>
<dbReference type="VGNC" id="VGNC:30268">
    <property type="gene designation" value="IRAK4"/>
</dbReference>
<dbReference type="eggNOG" id="KOG1187">
    <property type="taxonomic scope" value="Eukaryota"/>
</dbReference>
<dbReference type="GeneTree" id="ENSGT00940000158792"/>
<dbReference type="HOGENOM" id="CLU_000288_21_15_1"/>
<dbReference type="InParanoid" id="Q1RMT8"/>
<dbReference type="OMA" id="PSVHKMY"/>
<dbReference type="OrthoDB" id="4062651at2759"/>
<dbReference type="TreeFam" id="TF351380"/>
<dbReference type="Reactome" id="R-BTA-1257604">
    <property type="pathway name" value="PIP3 activates AKT signaling"/>
</dbReference>
<dbReference type="Reactome" id="R-BTA-6811558">
    <property type="pathway name" value="PI5P, PP2A and IER3 Regulate PI3K/AKT Signaling"/>
</dbReference>
<dbReference type="Reactome" id="R-BTA-9020702">
    <property type="pathway name" value="Interleukin-1 signaling"/>
</dbReference>
<dbReference type="Proteomes" id="UP000009136">
    <property type="component" value="Chromosome 5"/>
</dbReference>
<dbReference type="Bgee" id="ENSBTAG00000021105">
    <property type="expression patterns" value="Expressed in monocyte and 107 other cell types or tissues"/>
</dbReference>
<dbReference type="GO" id="GO:0009986">
    <property type="term" value="C:cell surface"/>
    <property type="evidence" value="ECO:0007669"/>
    <property type="project" value="Ensembl"/>
</dbReference>
<dbReference type="GO" id="GO:0005737">
    <property type="term" value="C:cytoplasm"/>
    <property type="evidence" value="ECO:0000318"/>
    <property type="project" value="GO_Central"/>
</dbReference>
<dbReference type="GO" id="GO:0005634">
    <property type="term" value="C:nucleus"/>
    <property type="evidence" value="ECO:0000318"/>
    <property type="project" value="GO_Central"/>
</dbReference>
<dbReference type="GO" id="GO:0005886">
    <property type="term" value="C:plasma membrane"/>
    <property type="evidence" value="ECO:0000318"/>
    <property type="project" value="GO_Central"/>
</dbReference>
<dbReference type="GO" id="GO:0005524">
    <property type="term" value="F:ATP binding"/>
    <property type="evidence" value="ECO:0007669"/>
    <property type="project" value="UniProtKB-KW"/>
</dbReference>
<dbReference type="GO" id="GO:0005149">
    <property type="term" value="F:interleukin-1 receptor binding"/>
    <property type="evidence" value="ECO:0007669"/>
    <property type="project" value="Ensembl"/>
</dbReference>
<dbReference type="GO" id="GO:0000287">
    <property type="term" value="F:magnesium ion binding"/>
    <property type="evidence" value="ECO:0007669"/>
    <property type="project" value="InterPro"/>
</dbReference>
<dbReference type="GO" id="GO:0019901">
    <property type="term" value="F:protein kinase binding"/>
    <property type="evidence" value="ECO:0007669"/>
    <property type="project" value="Ensembl"/>
</dbReference>
<dbReference type="GO" id="GO:0106310">
    <property type="term" value="F:protein serine kinase activity"/>
    <property type="evidence" value="ECO:0007669"/>
    <property type="project" value="RHEA"/>
</dbReference>
<dbReference type="GO" id="GO:0004674">
    <property type="term" value="F:protein serine/threonine kinase activity"/>
    <property type="evidence" value="ECO:0007669"/>
    <property type="project" value="UniProtKB-KW"/>
</dbReference>
<dbReference type="GO" id="GO:0019221">
    <property type="term" value="P:cytokine-mediated signaling pathway"/>
    <property type="evidence" value="ECO:0000318"/>
    <property type="project" value="GO_Central"/>
</dbReference>
<dbReference type="GO" id="GO:0045087">
    <property type="term" value="P:innate immune response"/>
    <property type="evidence" value="ECO:0007669"/>
    <property type="project" value="UniProtKB-KW"/>
</dbReference>
<dbReference type="GO" id="GO:0070498">
    <property type="term" value="P:interleukin-1-mediated signaling pathway"/>
    <property type="evidence" value="ECO:0007669"/>
    <property type="project" value="Ensembl"/>
</dbReference>
<dbReference type="GO" id="GO:0038172">
    <property type="term" value="P:interleukin-33-mediated signaling pathway"/>
    <property type="evidence" value="ECO:0007669"/>
    <property type="project" value="Ensembl"/>
</dbReference>
<dbReference type="GO" id="GO:0035556">
    <property type="term" value="P:intracellular signal transduction"/>
    <property type="evidence" value="ECO:0000318"/>
    <property type="project" value="GO_Central"/>
</dbReference>
<dbReference type="GO" id="GO:0031663">
    <property type="term" value="P:lipopolysaccharide-mediated signaling pathway"/>
    <property type="evidence" value="ECO:0000318"/>
    <property type="project" value="GO_Central"/>
</dbReference>
<dbReference type="GO" id="GO:0002446">
    <property type="term" value="P:neutrophil mediated immunity"/>
    <property type="evidence" value="ECO:0000250"/>
    <property type="project" value="UniProtKB"/>
</dbReference>
<dbReference type="GO" id="GO:1990266">
    <property type="term" value="P:neutrophil migration"/>
    <property type="evidence" value="ECO:0000250"/>
    <property type="project" value="UniProtKB"/>
</dbReference>
<dbReference type="GO" id="GO:0043123">
    <property type="term" value="P:positive regulation of canonical NF-kappaB signal transduction"/>
    <property type="evidence" value="ECO:0000318"/>
    <property type="project" value="GO_Central"/>
</dbReference>
<dbReference type="GO" id="GO:0008063">
    <property type="term" value="P:Toll signaling pathway"/>
    <property type="evidence" value="ECO:0000318"/>
    <property type="project" value="GO_Central"/>
</dbReference>
<dbReference type="CDD" id="cd08793">
    <property type="entry name" value="Death_IRAK4"/>
    <property type="match status" value="1"/>
</dbReference>
<dbReference type="CDD" id="cd14158">
    <property type="entry name" value="STKc_IRAK4"/>
    <property type="match status" value="1"/>
</dbReference>
<dbReference type="FunFam" id="1.10.533.10:FF:000028">
    <property type="entry name" value="Interleukin 1 receptor-associated kinase 4"/>
    <property type="match status" value="1"/>
</dbReference>
<dbReference type="FunFam" id="1.10.510.10:FF:000414">
    <property type="entry name" value="Interleukin-1 receptor-associated kinase 4"/>
    <property type="match status" value="1"/>
</dbReference>
<dbReference type="FunFam" id="3.30.200.20:FF:000368">
    <property type="entry name" value="Interleukin-1 receptor-associated kinase 4"/>
    <property type="match status" value="1"/>
</dbReference>
<dbReference type="Gene3D" id="1.10.533.10">
    <property type="entry name" value="Death Domain, Fas"/>
    <property type="match status" value="1"/>
</dbReference>
<dbReference type="Gene3D" id="3.30.200.20">
    <property type="entry name" value="Phosphorylase Kinase, domain 1"/>
    <property type="match status" value="1"/>
</dbReference>
<dbReference type="Gene3D" id="1.10.510.10">
    <property type="entry name" value="Transferase(Phosphotransferase) domain 1"/>
    <property type="match status" value="1"/>
</dbReference>
<dbReference type="InterPro" id="IPR011029">
    <property type="entry name" value="DEATH-like_dom_sf"/>
</dbReference>
<dbReference type="InterPro" id="IPR017428">
    <property type="entry name" value="IRAK4"/>
</dbReference>
<dbReference type="InterPro" id="IPR037970">
    <property type="entry name" value="IRAK4_Death"/>
</dbReference>
<dbReference type="InterPro" id="IPR011009">
    <property type="entry name" value="Kinase-like_dom_sf"/>
</dbReference>
<dbReference type="InterPro" id="IPR000719">
    <property type="entry name" value="Prot_kinase_dom"/>
</dbReference>
<dbReference type="PANTHER" id="PTHR47989">
    <property type="entry name" value="OS01G0750732 PROTEIN"/>
    <property type="match status" value="1"/>
</dbReference>
<dbReference type="PANTHER" id="PTHR47989:SF22">
    <property type="entry name" value="SERINE_THREONINE-PROTEIN KINASE-LIKE PROTEIN CCR1"/>
    <property type="match status" value="1"/>
</dbReference>
<dbReference type="Pfam" id="PF00069">
    <property type="entry name" value="Pkinase"/>
    <property type="match status" value="1"/>
</dbReference>
<dbReference type="PIRSF" id="PIRSF038189">
    <property type="entry name" value="IRAK4"/>
    <property type="match status" value="1"/>
</dbReference>
<dbReference type="SMART" id="SM00220">
    <property type="entry name" value="S_TKc"/>
    <property type="match status" value="1"/>
</dbReference>
<dbReference type="SUPFAM" id="SSF47986">
    <property type="entry name" value="DEATH domain"/>
    <property type="match status" value="1"/>
</dbReference>
<dbReference type="SUPFAM" id="SSF56112">
    <property type="entry name" value="Protein kinase-like (PK-like)"/>
    <property type="match status" value="1"/>
</dbReference>
<dbReference type="PROSITE" id="PS50011">
    <property type="entry name" value="PROTEIN_KINASE_DOM"/>
    <property type="match status" value="1"/>
</dbReference>
<comment type="function">
    <text evidence="1">Serine/threonine-protein kinase that plays a critical role in initiating innate immune response against foreign pathogens. Involved in Toll-like receptor (TLR) and IL-1R signaling pathways. Is rapidly recruited by MYD88 to the receptor-signaling complex upon TLR activation to form the Myddosome together with IRAK2. Phosphorylates initially IRAK1, thus stimulating the kinase activity and intensive autophosphorylation of IRAK1. Phosphorylates E3 ubiquitin ligases Pellino proteins (PELI1, PELI2 and PELI3) to promote pellino-mediated polyubiquitination of IRAK1. Then, the ubiquitin-binding domain of IKBKG/NEMO binds to polyubiquitinated IRAK1 bringing together the IRAK1-MAP3K7/TAK1-TRAF6 complex and the NEMO-IKKA-IKKB complex. In turn, MAP3K7/TAK1 activates IKKs (CHUK/IKKA and IKBKB/IKKB) leading to NF-kappa-B nuclear translocation and activation. Alternatively, phosphorylates TIRAP to promote its ubiquitination and subsequent degradation. Phosphorylates NCF1 and regulates NADPH oxidase activation after LPS stimulation suggesting a similar mechanism during microbial infections (By similarity).</text>
</comment>
<comment type="catalytic activity">
    <reaction>
        <text>L-seryl-[protein] + ATP = O-phospho-L-seryl-[protein] + ADP + H(+)</text>
        <dbReference type="Rhea" id="RHEA:17989"/>
        <dbReference type="Rhea" id="RHEA-COMP:9863"/>
        <dbReference type="Rhea" id="RHEA-COMP:11604"/>
        <dbReference type="ChEBI" id="CHEBI:15378"/>
        <dbReference type="ChEBI" id="CHEBI:29999"/>
        <dbReference type="ChEBI" id="CHEBI:30616"/>
        <dbReference type="ChEBI" id="CHEBI:83421"/>
        <dbReference type="ChEBI" id="CHEBI:456216"/>
        <dbReference type="EC" id="2.7.11.1"/>
    </reaction>
</comment>
<comment type="catalytic activity">
    <reaction>
        <text>L-threonyl-[protein] + ATP = O-phospho-L-threonyl-[protein] + ADP + H(+)</text>
        <dbReference type="Rhea" id="RHEA:46608"/>
        <dbReference type="Rhea" id="RHEA-COMP:11060"/>
        <dbReference type="Rhea" id="RHEA-COMP:11605"/>
        <dbReference type="ChEBI" id="CHEBI:15378"/>
        <dbReference type="ChEBI" id="CHEBI:30013"/>
        <dbReference type="ChEBI" id="CHEBI:30616"/>
        <dbReference type="ChEBI" id="CHEBI:61977"/>
        <dbReference type="ChEBI" id="CHEBI:456216"/>
        <dbReference type="EC" id="2.7.11.1"/>
    </reaction>
</comment>
<comment type="cofactor">
    <cofactor evidence="1">
        <name>Mg(2+)</name>
        <dbReference type="ChEBI" id="CHEBI:18420"/>
    </cofactor>
</comment>
<comment type="subunit">
    <text evidence="2">Associates with MYD88 and IRAK2 to form a ternary complex called the Myddosome. Once phosphorylated, IRAK4 dissociates from the receptor complex and then associates with the TNF receptor-associated factor 6 (TRAF6), IRAK1, and PELI1; this intermediate complex is required for subsequent NF-kappa-B activation. Direct binding of SMAD6 to PELI1 prevents complex formation and hence negatively regulates IL1R-TLR signaling and eventually NF-kappa-B-mediated gene expression. Interacts with IL1RL1. Interacts (when phosphorylated) with IRAK1. May interact (when phosphorylated) with IRAK3.</text>
</comment>
<comment type="subcellular location">
    <subcellularLocation>
        <location evidence="1">Cytoplasm</location>
    </subcellularLocation>
</comment>
<comment type="PTM">
    <text evidence="1">Phosphorylated.</text>
</comment>
<comment type="similarity">
    <text evidence="4">Belongs to the protein kinase superfamily. TKL Ser/Thr protein kinase family. Pelle subfamily.</text>
</comment>
<reference key="1">
    <citation type="submission" date="2006-04" db="EMBL/GenBank/DDBJ databases">
        <authorList>
            <consortium name="NIH - Mammalian Gene Collection (MGC) project"/>
        </authorList>
    </citation>
    <scope>NUCLEOTIDE SEQUENCE [LARGE SCALE MRNA]</scope>
    <source>
        <strain>Hereford</strain>
        <tissue>Uterus</tissue>
    </source>
</reference>
<sequence length="461" mass="51575">MNKPITASTYVRCLSLGLIRKLSDFIDPQEGWKKLAVAIKKPSGDDRYNQFHIRRFEALLQIGKSPTCELLFDWGTTNCTVGDLVDILVQNEFFAPASLLLPDAVPKNVNTLPSKVTVVAVQQKPKPLCGKDRTSVISDENPEQNYVLPDSSSPENTSLEFSDTRFHSFSFFELKDVTNNFDERPISVGGNKMGEGGFGVVYKGYVNNRTVAVKKLAAMVDISTEELKQQFDQEIKVMAKCQHENLVELLGFSSDGDDLCLVYVYMPNGSLLDRLSCLDGTPPLSWNMRCKIAQGAANGLSYLHENHHIHRDIKSANILLDEDFTAKISDFGLARASEKFAQTVMTSRIVGTTAYMAPEALRGEITPKSDIYSFGVVLLEIITGLPAVDEHREPQLLLDIKEEIEDEEKTIEDYVDRKMNDIDSTSIETMYSVASQCLHEKKNKRPDIKKVQQLLEEMTGS</sequence>
<feature type="chain" id="PRO_0000260158" description="Interleukin-1 receptor-associated kinase 4">
    <location>
        <begin position="1"/>
        <end position="461"/>
    </location>
</feature>
<feature type="domain" description="Death">
    <location>
        <begin position="20"/>
        <end position="104"/>
    </location>
</feature>
<feature type="domain" description="Protein kinase" evidence="3">
    <location>
        <begin position="187"/>
        <end position="455"/>
    </location>
</feature>
<feature type="active site" description="Proton acceptor" evidence="3">
    <location>
        <position position="312"/>
    </location>
</feature>
<feature type="binding site" evidence="3">
    <location>
        <begin position="193"/>
        <end position="201"/>
    </location>
    <ligand>
        <name>ATP</name>
        <dbReference type="ChEBI" id="CHEBI:30616"/>
    </ligand>
</feature>
<feature type="binding site" evidence="3">
    <location>
        <position position="214"/>
    </location>
    <ligand>
        <name>ATP</name>
        <dbReference type="ChEBI" id="CHEBI:30616"/>
    </ligand>
</feature>
<feature type="binding site" evidence="3">
    <location>
        <begin position="314"/>
        <end position="317"/>
    </location>
    <ligand>
        <name>ATP</name>
        <dbReference type="ChEBI" id="CHEBI:30616"/>
    </ligand>
</feature>
<feature type="binding site" evidence="3">
    <location>
        <position position="330"/>
    </location>
    <ligand>
        <name>ATP</name>
        <dbReference type="ChEBI" id="CHEBI:30616"/>
    </ligand>
</feature>
<feature type="modified residue" description="N-acetylmethionine" evidence="2">
    <location>
        <position position="1"/>
    </location>
</feature>
<feature type="modified residue" description="N6-acetyllysine" evidence="2">
    <location>
        <position position="34"/>
    </location>
</feature>
<feature type="modified residue" description="Phosphothreonine" evidence="2">
    <location>
        <position position="343"/>
    </location>
</feature>
<feature type="modified residue" description="Phosphothreonine" evidence="2">
    <location>
        <position position="346"/>
    </location>
</feature>
<feature type="modified residue" description="Phosphoserine" evidence="2">
    <location>
        <position position="347"/>
    </location>
</feature>
<keyword id="KW-0007">Acetylation</keyword>
<keyword id="KW-0067">ATP-binding</keyword>
<keyword id="KW-0963">Cytoplasm</keyword>
<keyword id="KW-0391">Immunity</keyword>
<keyword id="KW-0399">Innate immunity</keyword>
<keyword id="KW-0418">Kinase</keyword>
<keyword id="KW-0460">Magnesium</keyword>
<keyword id="KW-0547">Nucleotide-binding</keyword>
<keyword id="KW-0597">Phosphoprotein</keyword>
<keyword id="KW-1185">Reference proteome</keyword>
<keyword id="KW-0723">Serine/threonine-protein kinase</keyword>
<keyword id="KW-0808">Transferase</keyword>